<dbReference type="EMBL" id="Z25471">
    <property type="protein sequence ID" value="CAA80963.1"/>
    <property type="molecule type" value="mRNA"/>
</dbReference>
<dbReference type="PIR" id="T06555">
    <property type="entry name" value="T06555"/>
</dbReference>
<dbReference type="SMR" id="Q41001"/>
<dbReference type="GO" id="GO:0005886">
    <property type="term" value="C:plasma membrane"/>
    <property type="evidence" value="ECO:0007669"/>
    <property type="project" value="TreeGrafter"/>
</dbReference>
<dbReference type="GO" id="GO:0009055">
    <property type="term" value="F:electron transfer activity"/>
    <property type="evidence" value="ECO:0007669"/>
    <property type="project" value="InterPro"/>
</dbReference>
<dbReference type="GO" id="GO:0046872">
    <property type="term" value="F:metal ion binding"/>
    <property type="evidence" value="ECO:0007669"/>
    <property type="project" value="UniProtKB-KW"/>
</dbReference>
<dbReference type="CDD" id="cd04216">
    <property type="entry name" value="Phytocyanin"/>
    <property type="match status" value="1"/>
</dbReference>
<dbReference type="FunFam" id="2.60.40.420:FF:000003">
    <property type="entry name" value="Blue copper"/>
    <property type="match status" value="1"/>
</dbReference>
<dbReference type="Gene3D" id="2.60.40.420">
    <property type="entry name" value="Cupredoxins - blue copper proteins"/>
    <property type="match status" value="1"/>
</dbReference>
<dbReference type="InterPro" id="IPR028871">
    <property type="entry name" value="BlueCu_1_BS"/>
</dbReference>
<dbReference type="InterPro" id="IPR008972">
    <property type="entry name" value="Cupredoxin"/>
</dbReference>
<dbReference type="InterPro" id="IPR039391">
    <property type="entry name" value="Phytocyanin-like"/>
</dbReference>
<dbReference type="InterPro" id="IPR003245">
    <property type="entry name" value="Phytocyanin_dom"/>
</dbReference>
<dbReference type="PANTHER" id="PTHR33021">
    <property type="entry name" value="BLUE COPPER PROTEIN"/>
    <property type="match status" value="1"/>
</dbReference>
<dbReference type="PANTHER" id="PTHR33021:SF193">
    <property type="entry name" value="OS06G0218600 PROTEIN"/>
    <property type="match status" value="1"/>
</dbReference>
<dbReference type="Pfam" id="PF02298">
    <property type="entry name" value="Cu_bind_like"/>
    <property type="match status" value="1"/>
</dbReference>
<dbReference type="SUPFAM" id="SSF49503">
    <property type="entry name" value="Cupredoxins"/>
    <property type="match status" value="1"/>
</dbReference>
<dbReference type="PROSITE" id="PS00196">
    <property type="entry name" value="COPPER_BLUE"/>
    <property type="match status" value="1"/>
</dbReference>
<dbReference type="PROSITE" id="PS51485">
    <property type="entry name" value="PHYTOCYANIN"/>
    <property type="match status" value="1"/>
</dbReference>
<reference key="1">
    <citation type="thesis" date="1994" institute="Durham University" country="United Kingdom">
        <authorList>
            <person name="Drew J.E."/>
        </authorList>
    </citation>
    <scope>NUCLEOTIDE SEQUENCE [MRNA]</scope>
    <source>
        <strain>cv. Line 59</strain>
        <tissue>Pod</tissue>
    </source>
</reference>
<organism>
    <name type="scientific">Pisum sativum</name>
    <name type="common">Garden pea</name>
    <name type="synonym">Lathyrus oleraceus</name>
    <dbReference type="NCBI Taxonomy" id="3888"/>
    <lineage>
        <taxon>Eukaryota</taxon>
        <taxon>Viridiplantae</taxon>
        <taxon>Streptophyta</taxon>
        <taxon>Embryophyta</taxon>
        <taxon>Tracheophyta</taxon>
        <taxon>Spermatophyta</taxon>
        <taxon>Magnoliopsida</taxon>
        <taxon>eudicotyledons</taxon>
        <taxon>Gunneridae</taxon>
        <taxon>Pentapetalae</taxon>
        <taxon>rosids</taxon>
        <taxon>fabids</taxon>
        <taxon>Fabales</taxon>
        <taxon>Fabaceae</taxon>
        <taxon>Papilionoideae</taxon>
        <taxon>50 kb inversion clade</taxon>
        <taxon>NPAAA clade</taxon>
        <taxon>Hologalegina</taxon>
        <taxon>IRL clade</taxon>
        <taxon>Fabeae</taxon>
        <taxon>Pisum</taxon>
    </lineage>
</organism>
<sequence>MAFSNALVLCFLLAIINMALPSLATVYTVGDTSGWVIGGDYSTWASDKTFAVGDSLVFNYGAGAHTVDEVKESDYKSCTSGNSISTDSTGATTIPLKKAGKHYFICGVPGHSTGGMKLSIKVKASSGSSAAPSATPSSSGKGSPSSDDTPAATTTTTTPTKQNESSATSLSPIVALFFTVSWICSYVLV</sequence>
<accession>Q41001</accession>
<protein>
    <recommendedName>
        <fullName>Blue copper protein</fullName>
    </recommendedName>
</protein>
<feature type="signal peptide" evidence="1">
    <location>
        <begin position="1"/>
        <end position="24"/>
    </location>
</feature>
<feature type="chain" id="PRO_0000002870" description="Blue copper protein">
    <location>
        <begin position="25"/>
        <end position="189"/>
    </location>
</feature>
<feature type="domain" description="Phytocyanin" evidence="2">
    <location>
        <begin position="25"/>
        <end position="124"/>
    </location>
</feature>
<feature type="region of interest" description="Disordered" evidence="3">
    <location>
        <begin position="127"/>
        <end position="165"/>
    </location>
</feature>
<feature type="compositionally biased region" description="Low complexity" evidence="3">
    <location>
        <begin position="127"/>
        <end position="160"/>
    </location>
</feature>
<feature type="binding site" evidence="2">
    <location>
        <position position="65"/>
    </location>
    <ligand>
        <name>Cu cation</name>
        <dbReference type="ChEBI" id="CHEBI:23378"/>
    </ligand>
</feature>
<feature type="binding site" evidence="2">
    <location>
        <position position="106"/>
    </location>
    <ligand>
        <name>Cu cation</name>
        <dbReference type="ChEBI" id="CHEBI:23378"/>
    </ligand>
</feature>
<feature type="binding site" evidence="2">
    <location>
        <position position="111"/>
    </location>
    <ligand>
        <name>Cu cation</name>
        <dbReference type="ChEBI" id="CHEBI:23378"/>
    </ligand>
</feature>
<feature type="glycosylation site" description="N-linked (GlcNAc...) asparagine" evidence="1">
    <location>
        <position position="163"/>
    </location>
</feature>
<feature type="disulfide bond" evidence="2">
    <location>
        <begin position="78"/>
        <end position="106"/>
    </location>
</feature>
<evidence type="ECO:0000255" key="1"/>
<evidence type="ECO:0000255" key="2">
    <source>
        <dbReference type="PROSITE-ProRule" id="PRU00818"/>
    </source>
</evidence>
<evidence type="ECO:0000256" key="3">
    <source>
        <dbReference type="SAM" id="MobiDB-lite"/>
    </source>
</evidence>
<keyword id="KW-0186">Copper</keyword>
<keyword id="KW-1015">Disulfide bond</keyword>
<keyword id="KW-0249">Electron transport</keyword>
<keyword id="KW-0325">Glycoprotein</keyword>
<keyword id="KW-0479">Metal-binding</keyword>
<keyword id="KW-0732">Signal</keyword>
<keyword id="KW-0813">Transport</keyword>
<name>BCP_PEA</name>
<proteinExistence type="evidence at transcript level"/>